<keyword id="KW-0324">Glycolysis</keyword>
<keyword id="KW-0413">Isomerase</keyword>
<evidence type="ECO:0000255" key="1">
    <source>
        <dbReference type="HAMAP-Rule" id="MF_01040"/>
    </source>
</evidence>
<proteinExistence type="inferred from homology"/>
<protein>
    <recommendedName>
        <fullName evidence="1">Probable phosphoglycerate mutase GpmB</fullName>
        <ecNumber evidence="1">5.4.2.-</ecNumber>
    </recommendedName>
    <alternativeName>
        <fullName evidence="1">PGAM</fullName>
    </alternativeName>
    <alternativeName>
        <fullName evidence="1">Phosphoglyceromutase</fullName>
    </alternativeName>
</protein>
<feature type="chain" id="PRO_1000064128" description="Probable phosphoglycerate mutase GpmB">
    <location>
        <begin position="1"/>
        <end position="215"/>
    </location>
</feature>
<feature type="active site" description="Tele-phosphohistidine intermediate" evidence="1">
    <location>
        <position position="9"/>
    </location>
</feature>
<feature type="active site" description="Proton donor/acceptor" evidence="1">
    <location>
        <position position="82"/>
    </location>
</feature>
<feature type="binding site" evidence="1">
    <location>
        <begin position="8"/>
        <end position="15"/>
    </location>
    <ligand>
        <name>substrate</name>
    </ligand>
</feature>
<feature type="binding site" evidence="1">
    <location>
        <begin position="21"/>
        <end position="22"/>
    </location>
    <ligand>
        <name>substrate</name>
    </ligand>
</feature>
<feature type="binding site" evidence="1">
    <location>
        <position position="58"/>
    </location>
    <ligand>
        <name>substrate</name>
    </ligand>
</feature>
<feature type="binding site" evidence="1">
    <location>
        <position position="60"/>
    </location>
    <ligand>
        <name>substrate</name>
    </ligand>
</feature>
<feature type="binding site" evidence="1">
    <location>
        <begin position="82"/>
        <end position="85"/>
    </location>
    <ligand>
        <name>substrate</name>
    </ligand>
</feature>
<feature type="binding site" evidence="1">
    <location>
        <begin position="104"/>
        <end position="105"/>
    </location>
    <ligand>
        <name>substrate</name>
    </ligand>
</feature>
<feature type="binding site" evidence="1">
    <location>
        <begin position="151"/>
        <end position="152"/>
    </location>
    <ligand>
        <name>substrate</name>
    </ligand>
</feature>
<feature type="site" description="Transition state stabilizer" evidence="1">
    <location>
        <position position="150"/>
    </location>
</feature>
<dbReference type="EC" id="5.4.2.-" evidence="1"/>
<dbReference type="EMBL" id="AE017220">
    <property type="protein sequence ID" value="AAX68336.1"/>
    <property type="molecule type" value="Genomic_DNA"/>
</dbReference>
<dbReference type="RefSeq" id="WP_001541502.1">
    <property type="nucleotide sequence ID" value="NC_006905.1"/>
</dbReference>
<dbReference type="SMR" id="Q57G26"/>
<dbReference type="KEGG" id="sec:SCH_4430"/>
<dbReference type="HOGENOM" id="CLU_033323_9_5_6"/>
<dbReference type="UniPathway" id="UPA00109">
    <property type="reaction ID" value="UER00186"/>
</dbReference>
<dbReference type="Proteomes" id="UP000000538">
    <property type="component" value="Chromosome"/>
</dbReference>
<dbReference type="GO" id="GO:0005737">
    <property type="term" value="C:cytoplasm"/>
    <property type="evidence" value="ECO:0007669"/>
    <property type="project" value="TreeGrafter"/>
</dbReference>
<dbReference type="GO" id="GO:0016791">
    <property type="term" value="F:phosphatase activity"/>
    <property type="evidence" value="ECO:0007669"/>
    <property type="project" value="TreeGrafter"/>
</dbReference>
<dbReference type="GO" id="GO:0004619">
    <property type="term" value="F:phosphoglycerate mutase activity"/>
    <property type="evidence" value="ECO:0007669"/>
    <property type="project" value="UniProtKB-UniRule"/>
</dbReference>
<dbReference type="GO" id="GO:0006096">
    <property type="term" value="P:glycolytic process"/>
    <property type="evidence" value="ECO:0007669"/>
    <property type="project" value="UniProtKB-UniRule"/>
</dbReference>
<dbReference type="CDD" id="cd07067">
    <property type="entry name" value="HP_PGM_like"/>
    <property type="match status" value="1"/>
</dbReference>
<dbReference type="Gene3D" id="3.40.50.1240">
    <property type="entry name" value="Phosphoglycerate mutase-like"/>
    <property type="match status" value="1"/>
</dbReference>
<dbReference type="HAMAP" id="MF_01040">
    <property type="entry name" value="PGAM_GpmB"/>
    <property type="match status" value="1"/>
</dbReference>
<dbReference type="InterPro" id="IPR013078">
    <property type="entry name" value="His_Pase_superF_clade-1"/>
</dbReference>
<dbReference type="InterPro" id="IPR029033">
    <property type="entry name" value="His_PPase_superfam"/>
</dbReference>
<dbReference type="InterPro" id="IPR001345">
    <property type="entry name" value="PG/BPGM_mutase_AS"/>
</dbReference>
<dbReference type="InterPro" id="IPR050275">
    <property type="entry name" value="PGM_Phosphatase"/>
</dbReference>
<dbReference type="InterPro" id="IPR023086">
    <property type="entry name" value="Phosphoglycerate_mutase_GpmB"/>
</dbReference>
<dbReference type="NCBIfam" id="NF002901">
    <property type="entry name" value="PRK03482.1"/>
    <property type="match status" value="1"/>
</dbReference>
<dbReference type="PANTHER" id="PTHR48100">
    <property type="entry name" value="BROAD-SPECIFICITY PHOSPHATASE YOR283W-RELATED"/>
    <property type="match status" value="1"/>
</dbReference>
<dbReference type="PANTHER" id="PTHR48100:SF1">
    <property type="entry name" value="HISTIDINE PHOSPHATASE FAMILY PROTEIN-RELATED"/>
    <property type="match status" value="1"/>
</dbReference>
<dbReference type="Pfam" id="PF00300">
    <property type="entry name" value="His_Phos_1"/>
    <property type="match status" value="1"/>
</dbReference>
<dbReference type="SMART" id="SM00855">
    <property type="entry name" value="PGAM"/>
    <property type="match status" value="1"/>
</dbReference>
<dbReference type="SUPFAM" id="SSF53254">
    <property type="entry name" value="Phosphoglycerate mutase-like"/>
    <property type="match status" value="1"/>
</dbReference>
<dbReference type="PROSITE" id="PS00175">
    <property type="entry name" value="PG_MUTASE"/>
    <property type="match status" value="1"/>
</dbReference>
<gene>
    <name evidence="1" type="primary">gpmB</name>
    <name type="ordered locus">SCH_4430</name>
</gene>
<name>GPMB_SALCH</name>
<organism>
    <name type="scientific">Salmonella choleraesuis (strain SC-B67)</name>
    <dbReference type="NCBI Taxonomy" id="321314"/>
    <lineage>
        <taxon>Bacteria</taxon>
        <taxon>Pseudomonadati</taxon>
        <taxon>Pseudomonadota</taxon>
        <taxon>Gammaproteobacteria</taxon>
        <taxon>Enterobacterales</taxon>
        <taxon>Enterobacteriaceae</taxon>
        <taxon>Salmonella</taxon>
    </lineage>
</organism>
<comment type="catalytic activity">
    <reaction evidence="1">
        <text>(2R)-2-phosphoglycerate = (2R)-3-phosphoglycerate</text>
        <dbReference type="Rhea" id="RHEA:15901"/>
        <dbReference type="ChEBI" id="CHEBI:58272"/>
        <dbReference type="ChEBI" id="CHEBI:58289"/>
    </reaction>
</comment>
<comment type="pathway">
    <text evidence="1">Carbohydrate degradation; glycolysis; pyruvate from D-glyceraldehyde 3-phosphate: step 3/5.</text>
</comment>
<comment type="similarity">
    <text evidence="1">Belongs to the phosphoglycerate mutase family. GpmB subfamily.</text>
</comment>
<accession>Q57G26</accession>
<sequence length="215" mass="23898">MLQVYLVRHGETQWNAERRIQGQSDSPLTAKGEQQAMQVGERARSLSITHIISSDLGRTKRTAEIIAQACGCDITFDSRLRELDMGVLEKRQIDSLTEEEEGWRRQLVNGTQDGRIPGGESMQELSDRVHAALASCLELPQGSRPLLVSHGIALGCLVSTILGLPAWAERRLRLRNCSISRIDYQESQWLASGWVVETAGDVSHLDAPALDELQR</sequence>
<reference key="1">
    <citation type="journal article" date="2005" name="Nucleic Acids Res.">
        <title>The genome sequence of Salmonella enterica serovar Choleraesuis, a highly invasive and resistant zoonotic pathogen.</title>
        <authorList>
            <person name="Chiu C.-H."/>
            <person name="Tang P."/>
            <person name="Chu C."/>
            <person name="Hu S."/>
            <person name="Bao Q."/>
            <person name="Yu J."/>
            <person name="Chou Y.-Y."/>
            <person name="Wang H.-S."/>
            <person name="Lee Y.-S."/>
        </authorList>
    </citation>
    <scope>NUCLEOTIDE SEQUENCE [LARGE SCALE GENOMIC DNA]</scope>
    <source>
        <strain>SC-B67</strain>
    </source>
</reference>